<comment type="function">
    <text evidence="1">Catalyzes the reduction of the glycolytic intermediate dihydroxyacetone phosphate (DHAP) to sn-glycerol 3-phosphate (G3P), the key precursor for phospholipid synthesis.</text>
</comment>
<comment type="catalytic activity">
    <reaction evidence="1">
        <text>sn-glycerol 3-phosphate + NAD(+) = dihydroxyacetone phosphate + NADH + H(+)</text>
        <dbReference type="Rhea" id="RHEA:11092"/>
        <dbReference type="ChEBI" id="CHEBI:15378"/>
        <dbReference type="ChEBI" id="CHEBI:57540"/>
        <dbReference type="ChEBI" id="CHEBI:57597"/>
        <dbReference type="ChEBI" id="CHEBI:57642"/>
        <dbReference type="ChEBI" id="CHEBI:57945"/>
        <dbReference type="EC" id="1.1.1.94"/>
    </reaction>
    <physiologicalReaction direction="right-to-left" evidence="1">
        <dbReference type="Rhea" id="RHEA:11094"/>
    </physiologicalReaction>
</comment>
<comment type="catalytic activity">
    <reaction evidence="1">
        <text>sn-glycerol 3-phosphate + NADP(+) = dihydroxyacetone phosphate + NADPH + H(+)</text>
        <dbReference type="Rhea" id="RHEA:11096"/>
        <dbReference type="ChEBI" id="CHEBI:15378"/>
        <dbReference type="ChEBI" id="CHEBI:57597"/>
        <dbReference type="ChEBI" id="CHEBI:57642"/>
        <dbReference type="ChEBI" id="CHEBI:57783"/>
        <dbReference type="ChEBI" id="CHEBI:58349"/>
        <dbReference type="EC" id="1.1.1.94"/>
    </reaction>
    <physiologicalReaction direction="right-to-left" evidence="1">
        <dbReference type="Rhea" id="RHEA:11098"/>
    </physiologicalReaction>
</comment>
<comment type="pathway">
    <text evidence="1">Membrane lipid metabolism; glycerophospholipid metabolism.</text>
</comment>
<comment type="subcellular location">
    <subcellularLocation>
        <location evidence="1">Cytoplasm</location>
    </subcellularLocation>
</comment>
<comment type="similarity">
    <text evidence="1">Belongs to the NAD-dependent glycerol-3-phosphate dehydrogenase family.</text>
</comment>
<gene>
    <name evidence="1" type="primary">gpsA</name>
    <name type="ordered locus">LI0828</name>
</gene>
<reference key="1">
    <citation type="submission" date="2005-11" db="EMBL/GenBank/DDBJ databases">
        <title>The complete genome sequence of Lawsonia intracellularis: the causative agent of proliferative enteropathy.</title>
        <authorList>
            <person name="Kaur K."/>
            <person name="Zhang Q."/>
            <person name="Beckler D."/>
            <person name="Munir S."/>
            <person name="Li L."/>
            <person name="Kinsley K."/>
            <person name="Herron L."/>
            <person name="Peterson A."/>
            <person name="May B."/>
            <person name="Singh S."/>
            <person name="Gebhart C."/>
            <person name="Kapur V."/>
        </authorList>
    </citation>
    <scope>NUCLEOTIDE SEQUENCE [LARGE SCALE GENOMIC DNA]</scope>
    <source>
        <strain>PHE/MN1-00</strain>
    </source>
</reference>
<name>GPDA_LAWIP</name>
<keyword id="KW-0963">Cytoplasm</keyword>
<keyword id="KW-0444">Lipid biosynthesis</keyword>
<keyword id="KW-0443">Lipid metabolism</keyword>
<keyword id="KW-0520">NAD</keyword>
<keyword id="KW-0521">NADP</keyword>
<keyword id="KW-0547">Nucleotide-binding</keyword>
<keyword id="KW-0560">Oxidoreductase</keyword>
<keyword id="KW-0594">Phospholipid biosynthesis</keyword>
<keyword id="KW-1208">Phospholipid metabolism</keyword>
<keyword id="KW-1185">Reference proteome</keyword>
<organism>
    <name type="scientific">Lawsonia intracellularis (strain PHE/MN1-00)</name>
    <dbReference type="NCBI Taxonomy" id="363253"/>
    <lineage>
        <taxon>Bacteria</taxon>
        <taxon>Pseudomonadati</taxon>
        <taxon>Thermodesulfobacteriota</taxon>
        <taxon>Desulfovibrionia</taxon>
        <taxon>Desulfovibrionales</taxon>
        <taxon>Desulfovibrionaceae</taxon>
        <taxon>Lawsonia</taxon>
    </lineage>
</organism>
<protein>
    <recommendedName>
        <fullName evidence="1">Glycerol-3-phosphate dehydrogenase [NAD(P)+]</fullName>
        <ecNumber evidence="1">1.1.1.94</ecNumber>
    </recommendedName>
    <alternativeName>
        <fullName evidence="1">NAD(P)(+)-dependent glycerol-3-phosphate dehydrogenase</fullName>
    </alternativeName>
    <alternativeName>
        <fullName evidence="1">NAD(P)H-dependent dihydroxyacetone-phosphate reductase</fullName>
    </alternativeName>
</protein>
<proteinExistence type="inferred from homology"/>
<evidence type="ECO:0000255" key="1">
    <source>
        <dbReference type="HAMAP-Rule" id="MF_00394"/>
    </source>
</evidence>
<sequence>MSNPQSIVVLGGGSWGTAVAHLLATGGHKVHLVLRSQKLADYINMHHENNIYLPGFSIHPAIHAVTGKISFLTKEPAHVLAKATIVILSVPCQSLRPVLQELEPLLTKNCILVNTAKGIEVETLKTVEQMILDEMAHRVSHYAVLSGPSFAEEVMCEKPTAVVLACRNEQLGEHLREIFSTPWFRTYSSTDVTGVELGGATKNVIAIAAGVSDGLGFGINTRVALMTRGLAETTRLGKALGASPLTFSGLSGLGDLFLTCSGELSRNRQVGLRLGKGELLKNITNSMNMIAEGIKTTYAVNTLASKLNVDMPITKAVYNVLEGVISPHEAVQKLLCRQLRNESLDETQPIWTDIP</sequence>
<feature type="chain" id="PRO_0000255327" description="Glycerol-3-phosphate dehydrogenase [NAD(P)+]">
    <location>
        <begin position="1"/>
        <end position="355"/>
    </location>
</feature>
<feature type="active site" description="Proton acceptor" evidence="1">
    <location>
        <position position="202"/>
    </location>
</feature>
<feature type="binding site" evidence="1">
    <location>
        <position position="14"/>
    </location>
    <ligand>
        <name>NADPH</name>
        <dbReference type="ChEBI" id="CHEBI:57783"/>
    </ligand>
</feature>
<feature type="binding site" evidence="1">
    <location>
        <position position="15"/>
    </location>
    <ligand>
        <name>NADPH</name>
        <dbReference type="ChEBI" id="CHEBI:57783"/>
    </ligand>
</feature>
<feature type="binding site" evidence="1">
    <location>
        <position position="35"/>
    </location>
    <ligand>
        <name>NADPH</name>
        <dbReference type="ChEBI" id="CHEBI:57783"/>
    </ligand>
</feature>
<feature type="binding site" evidence="1">
    <location>
        <position position="117"/>
    </location>
    <ligand>
        <name>NADPH</name>
        <dbReference type="ChEBI" id="CHEBI:57783"/>
    </ligand>
</feature>
<feature type="binding site" evidence="1">
    <location>
        <position position="117"/>
    </location>
    <ligand>
        <name>sn-glycerol 3-phosphate</name>
        <dbReference type="ChEBI" id="CHEBI:57597"/>
    </ligand>
</feature>
<feature type="binding site" evidence="1">
    <location>
        <position position="147"/>
    </location>
    <ligand>
        <name>sn-glycerol 3-phosphate</name>
        <dbReference type="ChEBI" id="CHEBI:57597"/>
    </ligand>
</feature>
<feature type="binding site" evidence="1">
    <location>
        <position position="149"/>
    </location>
    <ligand>
        <name>sn-glycerol 3-phosphate</name>
        <dbReference type="ChEBI" id="CHEBI:57597"/>
    </ligand>
</feature>
<feature type="binding site" evidence="1">
    <location>
        <position position="151"/>
    </location>
    <ligand>
        <name>NADPH</name>
        <dbReference type="ChEBI" id="CHEBI:57783"/>
    </ligand>
</feature>
<feature type="binding site" evidence="1">
    <location>
        <position position="202"/>
    </location>
    <ligand>
        <name>sn-glycerol 3-phosphate</name>
        <dbReference type="ChEBI" id="CHEBI:57597"/>
    </ligand>
</feature>
<feature type="binding site" evidence="1">
    <location>
        <position position="255"/>
    </location>
    <ligand>
        <name>sn-glycerol 3-phosphate</name>
        <dbReference type="ChEBI" id="CHEBI:57597"/>
    </ligand>
</feature>
<feature type="binding site" evidence="1">
    <location>
        <position position="265"/>
    </location>
    <ligand>
        <name>sn-glycerol 3-phosphate</name>
        <dbReference type="ChEBI" id="CHEBI:57597"/>
    </ligand>
</feature>
<feature type="binding site" evidence="1">
    <location>
        <position position="266"/>
    </location>
    <ligand>
        <name>NADPH</name>
        <dbReference type="ChEBI" id="CHEBI:57783"/>
    </ligand>
</feature>
<feature type="binding site" evidence="1">
    <location>
        <position position="266"/>
    </location>
    <ligand>
        <name>sn-glycerol 3-phosphate</name>
        <dbReference type="ChEBI" id="CHEBI:57597"/>
    </ligand>
</feature>
<feature type="binding site" evidence="1">
    <location>
        <position position="267"/>
    </location>
    <ligand>
        <name>sn-glycerol 3-phosphate</name>
        <dbReference type="ChEBI" id="CHEBI:57597"/>
    </ligand>
</feature>
<feature type="binding site" evidence="1">
    <location>
        <position position="290"/>
    </location>
    <ligand>
        <name>NADPH</name>
        <dbReference type="ChEBI" id="CHEBI:57783"/>
    </ligand>
</feature>
<feature type="binding site" evidence="1">
    <location>
        <position position="292"/>
    </location>
    <ligand>
        <name>NADPH</name>
        <dbReference type="ChEBI" id="CHEBI:57783"/>
    </ligand>
</feature>
<dbReference type="EC" id="1.1.1.94" evidence="1"/>
<dbReference type="EMBL" id="AM180252">
    <property type="protein sequence ID" value="CAJ54882.1"/>
    <property type="molecule type" value="Genomic_DNA"/>
</dbReference>
<dbReference type="RefSeq" id="WP_011526911.1">
    <property type="nucleotide sequence ID" value="NC_008011.1"/>
</dbReference>
<dbReference type="SMR" id="Q1MQ45"/>
<dbReference type="STRING" id="363253.LI0828"/>
<dbReference type="KEGG" id="lip:LI0828"/>
<dbReference type="eggNOG" id="COG0240">
    <property type="taxonomic scope" value="Bacteria"/>
</dbReference>
<dbReference type="HOGENOM" id="CLU_033449_0_2_7"/>
<dbReference type="OrthoDB" id="9812273at2"/>
<dbReference type="UniPathway" id="UPA00940"/>
<dbReference type="Proteomes" id="UP000002430">
    <property type="component" value="Chromosome"/>
</dbReference>
<dbReference type="GO" id="GO:0005829">
    <property type="term" value="C:cytosol"/>
    <property type="evidence" value="ECO:0007669"/>
    <property type="project" value="TreeGrafter"/>
</dbReference>
<dbReference type="GO" id="GO:0047952">
    <property type="term" value="F:glycerol-3-phosphate dehydrogenase [NAD(P)+] activity"/>
    <property type="evidence" value="ECO:0007669"/>
    <property type="project" value="UniProtKB-UniRule"/>
</dbReference>
<dbReference type="GO" id="GO:0051287">
    <property type="term" value="F:NAD binding"/>
    <property type="evidence" value="ECO:0007669"/>
    <property type="project" value="InterPro"/>
</dbReference>
<dbReference type="GO" id="GO:0005975">
    <property type="term" value="P:carbohydrate metabolic process"/>
    <property type="evidence" value="ECO:0007669"/>
    <property type="project" value="InterPro"/>
</dbReference>
<dbReference type="GO" id="GO:0046167">
    <property type="term" value="P:glycerol-3-phosphate biosynthetic process"/>
    <property type="evidence" value="ECO:0007669"/>
    <property type="project" value="UniProtKB-UniRule"/>
</dbReference>
<dbReference type="GO" id="GO:0046168">
    <property type="term" value="P:glycerol-3-phosphate catabolic process"/>
    <property type="evidence" value="ECO:0007669"/>
    <property type="project" value="InterPro"/>
</dbReference>
<dbReference type="GO" id="GO:0006650">
    <property type="term" value="P:glycerophospholipid metabolic process"/>
    <property type="evidence" value="ECO:0007669"/>
    <property type="project" value="UniProtKB-UniRule"/>
</dbReference>
<dbReference type="GO" id="GO:0008654">
    <property type="term" value="P:phospholipid biosynthetic process"/>
    <property type="evidence" value="ECO:0007669"/>
    <property type="project" value="UniProtKB-KW"/>
</dbReference>
<dbReference type="FunFam" id="1.10.1040.10:FF:000001">
    <property type="entry name" value="Glycerol-3-phosphate dehydrogenase [NAD(P)+]"/>
    <property type="match status" value="1"/>
</dbReference>
<dbReference type="FunFam" id="3.40.50.720:FF:000019">
    <property type="entry name" value="Glycerol-3-phosphate dehydrogenase [NAD(P)+]"/>
    <property type="match status" value="1"/>
</dbReference>
<dbReference type="Gene3D" id="1.10.1040.10">
    <property type="entry name" value="N-(1-d-carboxylethyl)-l-norvaline Dehydrogenase, domain 2"/>
    <property type="match status" value="1"/>
</dbReference>
<dbReference type="Gene3D" id="3.40.50.720">
    <property type="entry name" value="NAD(P)-binding Rossmann-like Domain"/>
    <property type="match status" value="1"/>
</dbReference>
<dbReference type="HAMAP" id="MF_00394">
    <property type="entry name" value="NAD_Glyc3P_dehydrog"/>
    <property type="match status" value="1"/>
</dbReference>
<dbReference type="InterPro" id="IPR008927">
    <property type="entry name" value="6-PGluconate_DH-like_C_sf"/>
</dbReference>
<dbReference type="InterPro" id="IPR013328">
    <property type="entry name" value="6PGD_dom2"/>
</dbReference>
<dbReference type="InterPro" id="IPR006168">
    <property type="entry name" value="G3P_DH_NAD-dep"/>
</dbReference>
<dbReference type="InterPro" id="IPR006109">
    <property type="entry name" value="G3P_DH_NAD-dep_C"/>
</dbReference>
<dbReference type="InterPro" id="IPR011128">
    <property type="entry name" value="G3P_DH_NAD-dep_N"/>
</dbReference>
<dbReference type="InterPro" id="IPR036291">
    <property type="entry name" value="NAD(P)-bd_dom_sf"/>
</dbReference>
<dbReference type="NCBIfam" id="NF000940">
    <property type="entry name" value="PRK00094.1-2"/>
    <property type="match status" value="1"/>
</dbReference>
<dbReference type="NCBIfam" id="NF000942">
    <property type="entry name" value="PRK00094.1-4"/>
    <property type="match status" value="1"/>
</dbReference>
<dbReference type="PANTHER" id="PTHR11728">
    <property type="entry name" value="GLYCEROL-3-PHOSPHATE DEHYDROGENASE"/>
    <property type="match status" value="1"/>
</dbReference>
<dbReference type="PANTHER" id="PTHR11728:SF1">
    <property type="entry name" value="GLYCEROL-3-PHOSPHATE DEHYDROGENASE [NAD(+)] 2, CHLOROPLASTIC"/>
    <property type="match status" value="1"/>
</dbReference>
<dbReference type="Pfam" id="PF07479">
    <property type="entry name" value="NAD_Gly3P_dh_C"/>
    <property type="match status" value="1"/>
</dbReference>
<dbReference type="Pfam" id="PF01210">
    <property type="entry name" value="NAD_Gly3P_dh_N"/>
    <property type="match status" value="1"/>
</dbReference>
<dbReference type="PIRSF" id="PIRSF000114">
    <property type="entry name" value="Glycerol-3-P_dh"/>
    <property type="match status" value="1"/>
</dbReference>
<dbReference type="PRINTS" id="PR00077">
    <property type="entry name" value="GPDHDRGNASE"/>
</dbReference>
<dbReference type="SUPFAM" id="SSF48179">
    <property type="entry name" value="6-phosphogluconate dehydrogenase C-terminal domain-like"/>
    <property type="match status" value="1"/>
</dbReference>
<dbReference type="SUPFAM" id="SSF51735">
    <property type="entry name" value="NAD(P)-binding Rossmann-fold domains"/>
    <property type="match status" value="1"/>
</dbReference>
<dbReference type="PROSITE" id="PS00957">
    <property type="entry name" value="NAD_G3PDH"/>
    <property type="match status" value="1"/>
</dbReference>
<accession>Q1MQ45</accession>